<protein>
    <recommendedName>
        <fullName evidence="2">Formamidopyrimidine-DNA glycosylase</fullName>
        <shortName evidence="2">Fapy-DNA glycosylase</shortName>
        <ecNumber evidence="2">3.2.2.23</ecNumber>
    </recommendedName>
    <alternativeName>
        <fullName evidence="2">DNA-(apurinic or apyrimidinic site) lyase MutM</fullName>
        <shortName evidence="2">AP lyase MutM</shortName>
        <ecNumber evidence="2">4.2.99.18</ecNumber>
    </alternativeName>
</protein>
<dbReference type="EC" id="3.2.2.23" evidence="2"/>
<dbReference type="EC" id="4.2.99.18" evidence="2"/>
<dbReference type="EMBL" id="AL766851">
    <property type="protein sequence ID" value="CAD47213.1"/>
    <property type="molecule type" value="Genomic_DNA"/>
</dbReference>
<dbReference type="RefSeq" id="WP_001114602.1">
    <property type="nucleotide sequence ID" value="NC_004368.1"/>
</dbReference>
<dbReference type="SMR" id="P64152"/>
<dbReference type="GeneID" id="66886349"/>
<dbReference type="KEGG" id="san:gbs1554"/>
<dbReference type="eggNOG" id="COG0266">
    <property type="taxonomic scope" value="Bacteria"/>
</dbReference>
<dbReference type="HOGENOM" id="CLU_038423_1_2_9"/>
<dbReference type="Proteomes" id="UP000000823">
    <property type="component" value="Chromosome"/>
</dbReference>
<dbReference type="GO" id="GO:0034039">
    <property type="term" value="F:8-oxo-7,8-dihydroguanine DNA N-glycosylase activity"/>
    <property type="evidence" value="ECO:0007669"/>
    <property type="project" value="TreeGrafter"/>
</dbReference>
<dbReference type="GO" id="GO:0140078">
    <property type="term" value="F:class I DNA-(apurinic or apyrimidinic site) endonuclease activity"/>
    <property type="evidence" value="ECO:0007669"/>
    <property type="project" value="UniProtKB-EC"/>
</dbReference>
<dbReference type="GO" id="GO:0003684">
    <property type="term" value="F:damaged DNA binding"/>
    <property type="evidence" value="ECO:0007669"/>
    <property type="project" value="InterPro"/>
</dbReference>
<dbReference type="GO" id="GO:0008270">
    <property type="term" value="F:zinc ion binding"/>
    <property type="evidence" value="ECO:0007669"/>
    <property type="project" value="UniProtKB-UniRule"/>
</dbReference>
<dbReference type="GO" id="GO:0006284">
    <property type="term" value="P:base-excision repair"/>
    <property type="evidence" value="ECO:0007669"/>
    <property type="project" value="InterPro"/>
</dbReference>
<dbReference type="CDD" id="cd08966">
    <property type="entry name" value="EcFpg-like_N"/>
    <property type="match status" value="1"/>
</dbReference>
<dbReference type="FunFam" id="1.10.8.50:FF:000003">
    <property type="entry name" value="Formamidopyrimidine-DNA glycosylase"/>
    <property type="match status" value="1"/>
</dbReference>
<dbReference type="FunFam" id="3.20.190.10:FF:000001">
    <property type="entry name" value="Formamidopyrimidine-DNA glycosylase"/>
    <property type="match status" value="1"/>
</dbReference>
<dbReference type="Gene3D" id="1.10.8.50">
    <property type="match status" value="1"/>
</dbReference>
<dbReference type="Gene3D" id="3.20.190.10">
    <property type="entry name" value="MutM-like, N-terminal"/>
    <property type="match status" value="1"/>
</dbReference>
<dbReference type="HAMAP" id="MF_00103">
    <property type="entry name" value="Fapy_DNA_glycosyl"/>
    <property type="match status" value="1"/>
</dbReference>
<dbReference type="InterPro" id="IPR015886">
    <property type="entry name" value="DNA_glyclase/AP_lyase_DNA-bd"/>
</dbReference>
<dbReference type="InterPro" id="IPR015887">
    <property type="entry name" value="DNA_glyclase_Znf_dom_DNA_BS"/>
</dbReference>
<dbReference type="InterPro" id="IPR020629">
    <property type="entry name" value="Formamido-pyr_DNA_Glyclase"/>
</dbReference>
<dbReference type="InterPro" id="IPR012319">
    <property type="entry name" value="FPG_cat"/>
</dbReference>
<dbReference type="InterPro" id="IPR035937">
    <property type="entry name" value="MutM-like_N-ter"/>
</dbReference>
<dbReference type="InterPro" id="IPR010979">
    <property type="entry name" value="Ribosomal_uS13-like_H2TH"/>
</dbReference>
<dbReference type="InterPro" id="IPR000214">
    <property type="entry name" value="Znf_DNA_glyclase/AP_lyase"/>
</dbReference>
<dbReference type="InterPro" id="IPR010663">
    <property type="entry name" value="Znf_FPG/IleRS"/>
</dbReference>
<dbReference type="NCBIfam" id="TIGR00577">
    <property type="entry name" value="fpg"/>
    <property type="match status" value="1"/>
</dbReference>
<dbReference type="NCBIfam" id="NF002211">
    <property type="entry name" value="PRK01103.1"/>
    <property type="match status" value="1"/>
</dbReference>
<dbReference type="PANTHER" id="PTHR22993">
    <property type="entry name" value="FORMAMIDOPYRIMIDINE-DNA GLYCOSYLASE"/>
    <property type="match status" value="1"/>
</dbReference>
<dbReference type="PANTHER" id="PTHR22993:SF9">
    <property type="entry name" value="FORMAMIDOPYRIMIDINE-DNA GLYCOSYLASE"/>
    <property type="match status" value="1"/>
</dbReference>
<dbReference type="Pfam" id="PF01149">
    <property type="entry name" value="Fapy_DNA_glyco"/>
    <property type="match status" value="1"/>
</dbReference>
<dbReference type="Pfam" id="PF06831">
    <property type="entry name" value="H2TH"/>
    <property type="match status" value="1"/>
</dbReference>
<dbReference type="Pfam" id="PF06827">
    <property type="entry name" value="zf-FPG_IleRS"/>
    <property type="match status" value="1"/>
</dbReference>
<dbReference type="SMART" id="SM00898">
    <property type="entry name" value="Fapy_DNA_glyco"/>
    <property type="match status" value="1"/>
</dbReference>
<dbReference type="SMART" id="SM01232">
    <property type="entry name" value="H2TH"/>
    <property type="match status" value="1"/>
</dbReference>
<dbReference type="SUPFAM" id="SSF57716">
    <property type="entry name" value="Glucocorticoid receptor-like (DNA-binding domain)"/>
    <property type="match status" value="1"/>
</dbReference>
<dbReference type="SUPFAM" id="SSF81624">
    <property type="entry name" value="N-terminal domain of MutM-like DNA repair proteins"/>
    <property type="match status" value="1"/>
</dbReference>
<dbReference type="SUPFAM" id="SSF46946">
    <property type="entry name" value="S13-like H2TH domain"/>
    <property type="match status" value="1"/>
</dbReference>
<dbReference type="PROSITE" id="PS51068">
    <property type="entry name" value="FPG_CAT"/>
    <property type="match status" value="1"/>
</dbReference>
<dbReference type="PROSITE" id="PS01242">
    <property type="entry name" value="ZF_FPG_1"/>
    <property type="match status" value="1"/>
</dbReference>
<dbReference type="PROSITE" id="PS51066">
    <property type="entry name" value="ZF_FPG_2"/>
    <property type="match status" value="1"/>
</dbReference>
<organism>
    <name type="scientific">Streptococcus agalactiae serotype III (strain NEM316)</name>
    <dbReference type="NCBI Taxonomy" id="211110"/>
    <lineage>
        <taxon>Bacteria</taxon>
        <taxon>Bacillati</taxon>
        <taxon>Bacillota</taxon>
        <taxon>Bacilli</taxon>
        <taxon>Lactobacillales</taxon>
        <taxon>Streptococcaceae</taxon>
        <taxon>Streptococcus</taxon>
    </lineage>
</organism>
<feature type="initiator methionine" description="Removed" evidence="1">
    <location>
        <position position="1"/>
    </location>
</feature>
<feature type="chain" id="PRO_0000170864" description="Formamidopyrimidine-DNA glycosylase">
    <location>
        <begin position="2"/>
        <end position="273"/>
    </location>
</feature>
<feature type="zinc finger region" description="FPG-type" evidence="2">
    <location>
        <begin position="238"/>
        <end position="272"/>
    </location>
</feature>
<feature type="active site" description="Schiff-base intermediate with DNA" evidence="2">
    <location>
        <position position="2"/>
    </location>
</feature>
<feature type="active site" description="Proton donor" evidence="2">
    <location>
        <position position="3"/>
    </location>
</feature>
<feature type="active site" description="Proton donor; for beta-elimination activity" evidence="2">
    <location>
        <position position="58"/>
    </location>
</feature>
<feature type="active site" description="Proton donor; for delta-elimination activity" evidence="2">
    <location>
        <position position="262"/>
    </location>
</feature>
<feature type="binding site" evidence="2">
    <location>
        <position position="91"/>
    </location>
    <ligand>
        <name>DNA</name>
        <dbReference type="ChEBI" id="CHEBI:16991"/>
    </ligand>
</feature>
<feature type="binding site" evidence="2">
    <location>
        <position position="110"/>
    </location>
    <ligand>
        <name>DNA</name>
        <dbReference type="ChEBI" id="CHEBI:16991"/>
    </ligand>
</feature>
<accession>P64152</accession>
<accession>Q8DYJ1</accession>
<accession>Q8E448</accession>
<proteinExistence type="inferred from homology"/>
<sequence>MPELPEVETVRKGLERLVVNQEIASITIKVPKMVKTDLNDFMISLPGKTIQQVLRRGKYLLFDFGEMVMVSHLRMEGKYLLFPNKVPDNKHFHLYFKLTNGSTLVYQDVRKFGTFELVRKSSLKDYFTQKKLGPEPTADTFQFEPFSKGLANSKKPIKPLLLDQRLVAGLGNIYVDEVLWAAKIHPQRLANQLTESETSLLHKEIIRILTLGIEKGGSTIRTYKNALGEDGTMQKYLQVYGKTGQPCPRCGCLIKKIKVGGRGTHYCPRCQCL</sequence>
<name>FPG_STRA3</name>
<keyword id="KW-0227">DNA damage</keyword>
<keyword id="KW-0234">DNA repair</keyword>
<keyword id="KW-0238">DNA-binding</keyword>
<keyword id="KW-0326">Glycosidase</keyword>
<keyword id="KW-0378">Hydrolase</keyword>
<keyword id="KW-0456">Lyase</keyword>
<keyword id="KW-0479">Metal-binding</keyword>
<keyword id="KW-0511">Multifunctional enzyme</keyword>
<keyword id="KW-0862">Zinc</keyword>
<keyword id="KW-0863">Zinc-finger</keyword>
<comment type="function">
    <text evidence="2">Involved in base excision repair of DNA damaged by oxidation or by mutagenic agents. Acts as a DNA glycosylase that recognizes and removes damaged bases. Has a preference for oxidized purines, such as 7,8-dihydro-8-oxoguanine (8-oxoG). Has AP (apurinic/apyrimidinic) lyase activity and introduces nicks in the DNA strand. Cleaves the DNA backbone by beta-delta elimination to generate a single-strand break at the site of the removed base with both 3'- and 5'-phosphates.</text>
</comment>
<comment type="catalytic activity">
    <reaction evidence="2">
        <text>Hydrolysis of DNA containing ring-opened 7-methylguanine residues, releasing 2,6-diamino-4-hydroxy-5-(N-methyl)formamidopyrimidine.</text>
        <dbReference type="EC" id="3.2.2.23"/>
    </reaction>
</comment>
<comment type="catalytic activity">
    <reaction evidence="2">
        <text>2'-deoxyribonucleotide-(2'-deoxyribose 5'-phosphate)-2'-deoxyribonucleotide-DNA = a 3'-end 2'-deoxyribonucleotide-(2,3-dehydro-2,3-deoxyribose 5'-phosphate)-DNA + a 5'-end 5'-phospho-2'-deoxyribonucleoside-DNA + H(+)</text>
        <dbReference type="Rhea" id="RHEA:66592"/>
        <dbReference type="Rhea" id="RHEA-COMP:13180"/>
        <dbReference type="Rhea" id="RHEA-COMP:16897"/>
        <dbReference type="Rhea" id="RHEA-COMP:17067"/>
        <dbReference type="ChEBI" id="CHEBI:15378"/>
        <dbReference type="ChEBI" id="CHEBI:136412"/>
        <dbReference type="ChEBI" id="CHEBI:157695"/>
        <dbReference type="ChEBI" id="CHEBI:167181"/>
        <dbReference type="EC" id="4.2.99.18"/>
    </reaction>
</comment>
<comment type="cofactor">
    <cofactor evidence="2">
        <name>Zn(2+)</name>
        <dbReference type="ChEBI" id="CHEBI:29105"/>
    </cofactor>
    <text evidence="2">Binds 1 zinc ion per subunit.</text>
</comment>
<comment type="subunit">
    <text evidence="2">Monomer.</text>
</comment>
<comment type="similarity">
    <text evidence="2">Belongs to the FPG family.</text>
</comment>
<reference key="1">
    <citation type="journal article" date="2002" name="Mol. Microbiol.">
        <title>Genome sequence of Streptococcus agalactiae, a pathogen causing invasive neonatal disease.</title>
        <authorList>
            <person name="Glaser P."/>
            <person name="Rusniok C."/>
            <person name="Buchrieser C."/>
            <person name="Chevalier F."/>
            <person name="Frangeul L."/>
            <person name="Msadek T."/>
            <person name="Zouine M."/>
            <person name="Couve E."/>
            <person name="Lalioui L."/>
            <person name="Poyart C."/>
            <person name="Trieu-Cuot P."/>
            <person name="Kunst F."/>
        </authorList>
    </citation>
    <scope>NUCLEOTIDE SEQUENCE [LARGE SCALE GENOMIC DNA]</scope>
    <source>
        <strain>NEM316</strain>
    </source>
</reference>
<gene>
    <name evidence="2" type="primary">mutM</name>
    <name evidence="2" type="synonym">fpg</name>
    <name type="ordered locus">gbs1554</name>
</gene>
<evidence type="ECO:0000250" key="1"/>
<evidence type="ECO:0000255" key="2">
    <source>
        <dbReference type="HAMAP-Rule" id="MF_00103"/>
    </source>
</evidence>